<comment type="function">
    <text evidence="1">Cell wall formation. Catalyzes the transfer of a GlcNAc subunit on undecaprenyl-pyrophosphoryl-MurNAc-pentapeptide (lipid intermediate I) to form undecaprenyl-pyrophosphoryl-MurNAc-(pentapeptide)GlcNAc (lipid intermediate II).</text>
</comment>
<comment type="catalytic activity">
    <reaction evidence="1">
        <text>di-trans,octa-cis-undecaprenyl diphospho-N-acetyl-alpha-D-muramoyl-L-alanyl-D-glutamyl-meso-2,6-diaminopimeloyl-D-alanyl-D-alanine + UDP-N-acetyl-alpha-D-glucosamine = di-trans,octa-cis-undecaprenyl diphospho-[N-acetyl-alpha-D-glucosaminyl-(1-&gt;4)]-N-acetyl-alpha-D-muramoyl-L-alanyl-D-glutamyl-meso-2,6-diaminopimeloyl-D-alanyl-D-alanine + UDP + H(+)</text>
        <dbReference type="Rhea" id="RHEA:31227"/>
        <dbReference type="ChEBI" id="CHEBI:15378"/>
        <dbReference type="ChEBI" id="CHEBI:57705"/>
        <dbReference type="ChEBI" id="CHEBI:58223"/>
        <dbReference type="ChEBI" id="CHEBI:61387"/>
        <dbReference type="ChEBI" id="CHEBI:61388"/>
        <dbReference type="EC" id="2.4.1.227"/>
    </reaction>
</comment>
<comment type="pathway">
    <text evidence="1">Cell wall biogenesis; peptidoglycan biosynthesis.</text>
</comment>
<comment type="subcellular location">
    <subcellularLocation>
        <location evidence="1">Cell inner membrane</location>
        <topology evidence="1">Peripheral membrane protein</topology>
        <orientation evidence="1">Cytoplasmic side</orientation>
    </subcellularLocation>
</comment>
<comment type="similarity">
    <text evidence="1">Belongs to the glycosyltransferase 28 family. MurG subfamily.</text>
</comment>
<accession>Q7N147</accession>
<name>MURG_PHOLL</name>
<dbReference type="EC" id="2.4.1.227" evidence="1"/>
<dbReference type="EMBL" id="BX571871">
    <property type="protein sequence ID" value="CAE16027.1"/>
    <property type="molecule type" value="Genomic_DNA"/>
</dbReference>
<dbReference type="RefSeq" id="WP_011147817.1">
    <property type="nucleotide sequence ID" value="NC_005126.1"/>
</dbReference>
<dbReference type="SMR" id="Q7N147"/>
<dbReference type="STRING" id="243265.plu3654"/>
<dbReference type="CAZy" id="GT28">
    <property type="family name" value="Glycosyltransferase Family 28"/>
</dbReference>
<dbReference type="GeneID" id="48849897"/>
<dbReference type="KEGG" id="plu:plu3654"/>
<dbReference type="eggNOG" id="COG0707">
    <property type="taxonomic scope" value="Bacteria"/>
</dbReference>
<dbReference type="HOGENOM" id="CLU_037404_2_0_6"/>
<dbReference type="OrthoDB" id="9808936at2"/>
<dbReference type="UniPathway" id="UPA00219"/>
<dbReference type="Proteomes" id="UP000002514">
    <property type="component" value="Chromosome"/>
</dbReference>
<dbReference type="GO" id="GO:0005886">
    <property type="term" value="C:plasma membrane"/>
    <property type="evidence" value="ECO:0007669"/>
    <property type="project" value="UniProtKB-SubCell"/>
</dbReference>
<dbReference type="GO" id="GO:0051991">
    <property type="term" value="F:UDP-N-acetyl-D-glucosamine:N-acetylmuramoyl-L-alanyl-D-glutamyl-meso-2,6-diaminopimelyl-D-alanyl-D-alanine-diphosphoundecaprenol 4-beta-N-acetylglucosaminlytransferase activity"/>
    <property type="evidence" value="ECO:0007669"/>
    <property type="project" value="RHEA"/>
</dbReference>
<dbReference type="GO" id="GO:0050511">
    <property type="term" value="F:undecaprenyldiphospho-muramoylpentapeptide beta-N-acetylglucosaminyltransferase activity"/>
    <property type="evidence" value="ECO:0007669"/>
    <property type="project" value="UniProtKB-UniRule"/>
</dbReference>
<dbReference type="GO" id="GO:0005975">
    <property type="term" value="P:carbohydrate metabolic process"/>
    <property type="evidence" value="ECO:0007669"/>
    <property type="project" value="InterPro"/>
</dbReference>
<dbReference type="GO" id="GO:0051301">
    <property type="term" value="P:cell division"/>
    <property type="evidence" value="ECO:0007669"/>
    <property type="project" value="UniProtKB-KW"/>
</dbReference>
<dbReference type="GO" id="GO:0071555">
    <property type="term" value="P:cell wall organization"/>
    <property type="evidence" value="ECO:0007669"/>
    <property type="project" value="UniProtKB-KW"/>
</dbReference>
<dbReference type="GO" id="GO:0030259">
    <property type="term" value="P:lipid glycosylation"/>
    <property type="evidence" value="ECO:0007669"/>
    <property type="project" value="UniProtKB-UniRule"/>
</dbReference>
<dbReference type="GO" id="GO:0009252">
    <property type="term" value="P:peptidoglycan biosynthetic process"/>
    <property type="evidence" value="ECO:0007669"/>
    <property type="project" value="UniProtKB-UniRule"/>
</dbReference>
<dbReference type="GO" id="GO:0008360">
    <property type="term" value="P:regulation of cell shape"/>
    <property type="evidence" value="ECO:0007669"/>
    <property type="project" value="UniProtKB-KW"/>
</dbReference>
<dbReference type="CDD" id="cd03785">
    <property type="entry name" value="GT28_MurG"/>
    <property type="match status" value="1"/>
</dbReference>
<dbReference type="FunFam" id="3.40.50.2000:FF:000016">
    <property type="entry name" value="UDP-N-acetylglucosamine--N-acetylmuramyl-(pentapeptide) pyrophosphoryl-undecaprenol N-acetylglucosamine transferase"/>
    <property type="match status" value="1"/>
</dbReference>
<dbReference type="FunFam" id="3.40.50.2000:FF:000018">
    <property type="entry name" value="UDP-N-acetylglucosamine--N-acetylmuramyl-(pentapeptide) pyrophosphoryl-undecaprenol N-acetylglucosamine transferase"/>
    <property type="match status" value="1"/>
</dbReference>
<dbReference type="Gene3D" id="3.40.50.2000">
    <property type="entry name" value="Glycogen Phosphorylase B"/>
    <property type="match status" value="2"/>
</dbReference>
<dbReference type="HAMAP" id="MF_00033">
    <property type="entry name" value="MurG"/>
    <property type="match status" value="1"/>
</dbReference>
<dbReference type="InterPro" id="IPR006009">
    <property type="entry name" value="GlcNAc_MurG"/>
</dbReference>
<dbReference type="InterPro" id="IPR007235">
    <property type="entry name" value="Glyco_trans_28_C"/>
</dbReference>
<dbReference type="InterPro" id="IPR004276">
    <property type="entry name" value="GlycoTrans_28_N"/>
</dbReference>
<dbReference type="NCBIfam" id="TIGR01133">
    <property type="entry name" value="murG"/>
    <property type="match status" value="1"/>
</dbReference>
<dbReference type="PANTHER" id="PTHR21015:SF22">
    <property type="entry name" value="GLYCOSYLTRANSFERASE"/>
    <property type="match status" value="1"/>
</dbReference>
<dbReference type="PANTHER" id="PTHR21015">
    <property type="entry name" value="UDP-N-ACETYLGLUCOSAMINE--N-ACETYLMURAMYL-(PENTAPEPTIDE) PYROPHOSPHORYL-UNDECAPRENOL N-ACETYLGLUCOSAMINE TRANSFERASE 1"/>
    <property type="match status" value="1"/>
</dbReference>
<dbReference type="Pfam" id="PF04101">
    <property type="entry name" value="Glyco_tran_28_C"/>
    <property type="match status" value="1"/>
</dbReference>
<dbReference type="Pfam" id="PF03033">
    <property type="entry name" value="Glyco_transf_28"/>
    <property type="match status" value="1"/>
</dbReference>
<dbReference type="SUPFAM" id="SSF53756">
    <property type="entry name" value="UDP-Glycosyltransferase/glycogen phosphorylase"/>
    <property type="match status" value="1"/>
</dbReference>
<reference key="1">
    <citation type="journal article" date="2003" name="Nat. Biotechnol.">
        <title>The genome sequence of the entomopathogenic bacterium Photorhabdus luminescens.</title>
        <authorList>
            <person name="Duchaud E."/>
            <person name="Rusniok C."/>
            <person name="Frangeul L."/>
            <person name="Buchrieser C."/>
            <person name="Givaudan A."/>
            <person name="Taourit S."/>
            <person name="Bocs S."/>
            <person name="Boursaux-Eude C."/>
            <person name="Chandler M."/>
            <person name="Charles J.-F."/>
            <person name="Dassa E."/>
            <person name="Derose R."/>
            <person name="Derzelle S."/>
            <person name="Freyssinet G."/>
            <person name="Gaudriault S."/>
            <person name="Medigue C."/>
            <person name="Lanois A."/>
            <person name="Powell K."/>
            <person name="Siguier P."/>
            <person name="Vincent R."/>
            <person name="Wingate V."/>
            <person name="Zouine M."/>
            <person name="Glaser P."/>
            <person name="Boemare N."/>
            <person name="Danchin A."/>
            <person name="Kunst F."/>
        </authorList>
    </citation>
    <scope>NUCLEOTIDE SEQUENCE [LARGE SCALE GENOMIC DNA]</scope>
    <source>
        <strain>DSM 15139 / CIP 105565 / TT01</strain>
    </source>
</reference>
<feature type="chain" id="PRO_0000109195" description="UDP-N-acetylglucosamine--N-acetylmuramyl-(pentapeptide) pyrophosphoryl-undecaprenol N-acetylglucosamine transferase">
    <location>
        <begin position="1"/>
        <end position="355"/>
    </location>
</feature>
<feature type="binding site" evidence="1">
    <location>
        <begin position="15"/>
        <end position="17"/>
    </location>
    <ligand>
        <name>UDP-N-acetyl-alpha-D-glucosamine</name>
        <dbReference type="ChEBI" id="CHEBI:57705"/>
    </ligand>
</feature>
<feature type="binding site" evidence="1">
    <location>
        <position position="127"/>
    </location>
    <ligand>
        <name>UDP-N-acetyl-alpha-D-glucosamine</name>
        <dbReference type="ChEBI" id="CHEBI:57705"/>
    </ligand>
</feature>
<feature type="binding site" evidence="1">
    <location>
        <position position="163"/>
    </location>
    <ligand>
        <name>UDP-N-acetyl-alpha-D-glucosamine</name>
        <dbReference type="ChEBI" id="CHEBI:57705"/>
    </ligand>
</feature>
<feature type="binding site" evidence="1">
    <location>
        <position position="191"/>
    </location>
    <ligand>
        <name>UDP-N-acetyl-alpha-D-glucosamine</name>
        <dbReference type="ChEBI" id="CHEBI:57705"/>
    </ligand>
</feature>
<feature type="binding site" evidence="1">
    <location>
        <position position="244"/>
    </location>
    <ligand>
        <name>UDP-N-acetyl-alpha-D-glucosamine</name>
        <dbReference type="ChEBI" id="CHEBI:57705"/>
    </ligand>
</feature>
<feature type="binding site" evidence="1">
    <location>
        <begin position="263"/>
        <end position="268"/>
    </location>
    <ligand>
        <name>UDP-N-acetyl-alpha-D-glucosamine</name>
        <dbReference type="ChEBI" id="CHEBI:57705"/>
    </ligand>
</feature>
<feature type="binding site" evidence="1">
    <location>
        <position position="288"/>
    </location>
    <ligand>
        <name>UDP-N-acetyl-alpha-D-glucosamine</name>
        <dbReference type="ChEBI" id="CHEBI:57705"/>
    </ligand>
</feature>
<proteinExistence type="inferred from homology"/>
<gene>
    <name evidence="1" type="primary">murG</name>
    <name type="ordered locus">plu3654</name>
</gene>
<organism>
    <name type="scientific">Photorhabdus laumondii subsp. laumondii (strain DSM 15139 / CIP 105565 / TT01)</name>
    <name type="common">Photorhabdus luminescens subsp. laumondii</name>
    <dbReference type="NCBI Taxonomy" id="243265"/>
    <lineage>
        <taxon>Bacteria</taxon>
        <taxon>Pseudomonadati</taxon>
        <taxon>Pseudomonadota</taxon>
        <taxon>Gammaproteobacteria</taxon>
        <taxon>Enterobacterales</taxon>
        <taxon>Morganellaceae</taxon>
        <taxon>Photorhabdus</taxon>
    </lineage>
</organism>
<keyword id="KW-0131">Cell cycle</keyword>
<keyword id="KW-0132">Cell division</keyword>
<keyword id="KW-0997">Cell inner membrane</keyword>
<keyword id="KW-1003">Cell membrane</keyword>
<keyword id="KW-0133">Cell shape</keyword>
<keyword id="KW-0961">Cell wall biogenesis/degradation</keyword>
<keyword id="KW-0328">Glycosyltransferase</keyword>
<keyword id="KW-0472">Membrane</keyword>
<keyword id="KW-0573">Peptidoglycan synthesis</keyword>
<keyword id="KW-1185">Reference proteome</keyword>
<keyword id="KW-0808">Transferase</keyword>
<sequence length="355" mass="38323">MSGKTRRLMVMAGGTGGHVFPGLAVAHHLKDQGWDVLWLGTADRMEADLVPKHGIDIEFIQISGLRGKGIKALLAAPVRIFKAIRQAKAIMRRYQPDVVLGMGGYVSGPGGIAAWMCGVPVVLHEQNGIAGLTNRWLAKIATTVLQAFPGAFPKAPVVGNPVREDVLALPIPEQRLTGREGPIRVLVVGGSQGARILNQAMPEIAARMGDKITLWHQTGKGAKESVQNAYDNSVKCEHKITEFIDDMAQAYAWADVVICRSGALTVSEVSAAGLPGIFVPFQHKDRQQYWNALPLEKVGAAKILEQPQFTVDAVIELLTQWQRPQLLEMAEKARSAAIVDATEQVSAALIDAAKK</sequence>
<protein>
    <recommendedName>
        <fullName evidence="1">UDP-N-acetylglucosamine--N-acetylmuramyl-(pentapeptide) pyrophosphoryl-undecaprenol N-acetylglucosamine transferase</fullName>
        <ecNumber evidence="1">2.4.1.227</ecNumber>
    </recommendedName>
    <alternativeName>
        <fullName evidence="1">Undecaprenyl-PP-MurNAc-pentapeptide-UDPGlcNAc GlcNAc transferase</fullName>
    </alternativeName>
</protein>
<evidence type="ECO:0000255" key="1">
    <source>
        <dbReference type="HAMAP-Rule" id="MF_00033"/>
    </source>
</evidence>